<accession>Q8L828</accession>
<accession>Q9LW87</accession>
<organism>
    <name type="scientific">Arabidopsis thaliana</name>
    <name type="common">Mouse-ear cress</name>
    <dbReference type="NCBI Taxonomy" id="3702"/>
    <lineage>
        <taxon>Eukaryota</taxon>
        <taxon>Viridiplantae</taxon>
        <taxon>Streptophyta</taxon>
        <taxon>Embryophyta</taxon>
        <taxon>Tracheophyta</taxon>
        <taxon>Spermatophyta</taxon>
        <taxon>Magnoliopsida</taxon>
        <taxon>eudicotyledons</taxon>
        <taxon>Gunneridae</taxon>
        <taxon>Pentapetalae</taxon>
        <taxon>rosids</taxon>
        <taxon>malvids</taxon>
        <taxon>Brassicales</taxon>
        <taxon>Brassicaceae</taxon>
        <taxon>Camelineae</taxon>
        <taxon>Arabidopsis</taxon>
    </lineage>
</organism>
<evidence type="ECO:0000250" key="1"/>
<evidence type="ECO:0000256" key="2">
    <source>
        <dbReference type="SAM" id="MobiDB-lite"/>
    </source>
</evidence>
<evidence type="ECO:0000305" key="3"/>
<name>COB23_ARATH</name>
<reference key="1">
    <citation type="journal article" date="2000" name="DNA Res.">
        <title>Structural analysis of Arabidopsis thaliana chromosome 3. I. Sequence features of the regions of 4,504,864 bp covered by sixty P1 and TAC clones.</title>
        <authorList>
            <person name="Sato S."/>
            <person name="Nakamura Y."/>
            <person name="Kaneko T."/>
            <person name="Katoh T."/>
            <person name="Asamizu E."/>
            <person name="Tabata S."/>
        </authorList>
    </citation>
    <scope>NUCLEOTIDE SEQUENCE [LARGE SCALE GENOMIC DNA]</scope>
    <source>
        <strain>cv. Columbia</strain>
    </source>
</reference>
<reference key="2">
    <citation type="journal article" date="2017" name="Plant J.">
        <title>Araport11: a complete reannotation of the Arabidopsis thaliana reference genome.</title>
        <authorList>
            <person name="Cheng C.Y."/>
            <person name="Krishnakumar V."/>
            <person name="Chan A.P."/>
            <person name="Thibaud-Nissen F."/>
            <person name="Schobel S."/>
            <person name="Town C.D."/>
        </authorList>
    </citation>
    <scope>GENOME REANNOTATION</scope>
    <source>
        <strain>cv. Columbia</strain>
    </source>
</reference>
<reference key="3">
    <citation type="journal article" date="2003" name="Science">
        <title>Empirical analysis of transcriptional activity in the Arabidopsis genome.</title>
        <authorList>
            <person name="Yamada K."/>
            <person name="Lim J."/>
            <person name="Dale J.M."/>
            <person name="Chen H."/>
            <person name="Shinn P."/>
            <person name="Palm C.J."/>
            <person name="Southwick A.M."/>
            <person name="Wu H.C."/>
            <person name="Kim C.J."/>
            <person name="Nguyen M."/>
            <person name="Pham P.K."/>
            <person name="Cheuk R.F."/>
            <person name="Karlin-Newmann G."/>
            <person name="Liu S.X."/>
            <person name="Lam B."/>
            <person name="Sakano H."/>
            <person name="Wu T."/>
            <person name="Yu G."/>
            <person name="Miranda M."/>
            <person name="Quach H.L."/>
            <person name="Tripp M."/>
            <person name="Chang C.H."/>
            <person name="Lee J.M."/>
            <person name="Toriumi M.J."/>
            <person name="Chan M.M."/>
            <person name="Tang C.C."/>
            <person name="Onodera C.S."/>
            <person name="Deng J.M."/>
            <person name="Akiyama K."/>
            <person name="Ansari Y."/>
            <person name="Arakawa T."/>
            <person name="Banh J."/>
            <person name="Banno F."/>
            <person name="Bowser L."/>
            <person name="Brooks S.Y."/>
            <person name="Carninci P."/>
            <person name="Chao Q."/>
            <person name="Choy N."/>
            <person name="Enju A."/>
            <person name="Goldsmith A.D."/>
            <person name="Gurjal M."/>
            <person name="Hansen N.F."/>
            <person name="Hayashizaki Y."/>
            <person name="Johnson-Hopson C."/>
            <person name="Hsuan V.W."/>
            <person name="Iida K."/>
            <person name="Karnes M."/>
            <person name="Khan S."/>
            <person name="Koesema E."/>
            <person name="Ishida J."/>
            <person name="Jiang P.X."/>
            <person name="Jones T."/>
            <person name="Kawai J."/>
            <person name="Kamiya A."/>
            <person name="Meyers C."/>
            <person name="Nakajima M."/>
            <person name="Narusaka M."/>
            <person name="Seki M."/>
            <person name="Sakurai T."/>
            <person name="Satou M."/>
            <person name="Tamse R."/>
            <person name="Vaysberg M."/>
            <person name="Wallender E.K."/>
            <person name="Wong C."/>
            <person name="Yamamura Y."/>
            <person name="Yuan S."/>
            <person name="Shinozaki K."/>
            <person name="Davis R.W."/>
            <person name="Theologis A."/>
            <person name="Ecker J.R."/>
        </authorList>
    </citation>
    <scope>NUCLEOTIDE SEQUENCE [LARGE SCALE MRNA] (ISOFORM 1)</scope>
    <source>
        <strain>cv. Columbia</strain>
    </source>
</reference>
<sequence length="909" mass="102476">MPLRLDIKRKFAQRSERVKSVDLHPTEPWILASLYSGTVCIWNYQTQTITKSFEVTELPVRSAKFIPRKQWVVAGADDMYIRVYNYNTMDKVKVFEAHSDYIRCVAVHPTLPYVLSSSDDMLIKLWDWENGWACTQIFEGHSHYVMQVVFNPKDTNTFASASLDRTIKIWNLGSPDPNFTLDAHQKGVNCVDYFTGGDKPYLITGSDDHTAKVWDYQTKSCVQTLDGHTHNVSAVCFHPELPIIITGSEDGTVRIWHATTYRLENTLNYGLERVWAIGYIKSSRRVVIGYDEGTIMVKLGREIPVASMDSSGKIIWAKHNEIQTANIKSIGAGYEATDGERLPLSVKELGTCDLYPQSLKHNPNGRFVVVCGDGEYIIYTALAWRNRSFGSGLEFVWSSEGECAVRESSSKIKIFSKNFQERKSIRPTFSAEKIFGGTLLAMCSNDFICFYDWAECRLIQQIDVTVKNLYWAESGDLVAIASDTSFYILKYNRELVSSHFDSGRPTDEEGVEDAFEVLHENDERVRTGIWVGDCFIYNNSSWKLNYCVGGEVTTMYHLDRPMYLLGYIANQSRVYLVDKEFNVIGYTLLLSLIEYKTLVMRGDLDRANQILPTIPKEQHNNVAHFLESRGMIEDALEIATDPDYKFDLAIQLGRLEIAKEIAEEVQSESKWKQLGELAMSSGKLQLAEDCMKYAMDLSGLLLLYSSLGDAEGVSKLACLAKEQGKNNVAFLCLFTLGRLEDCLQLLVESNRIPEAALMARSYLPSKVSEIVALWREDLSKVNPKAAESLADPEEYSNLFEDWQVALSVEANTAETRGVYTAAENYPSHADKPSITLVEAFRNLQVEAEESLENGNIDHEVAEENGHVENEGDEEEQQEEEVNEEEGVVDADSTDGAVLVNGSEVLTPHP</sequence>
<keyword id="KW-0025">Alternative splicing</keyword>
<keyword id="KW-0963">Cytoplasm</keyword>
<keyword id="KW-0968">Cytoplasmic vesicle</keyword>
<keyword id="KW-0931">ER-Golgi transport</keyword>
<keyword id="KW-0333">Golgi apparatus</keyword>
<keyword id="KW-0472">Membrane</keyword>
<keyword id="KW-0653">Protein transport</keyword>
<keyword id="KW-1185">Reference proteome</keyword>
<keyword id="KW-0677">Repeat</keyword>
<keyword id="KW-0813">Transport</keyword>
<keyword id="KW-0853">WD repeat</keyword>
<gene>
    <name type="ordered locus">At3g15980</name>
    <name type="ORF">MSL1.2</name>
</gene>
<comment type="function">
    <text evidence="1">The coatomer is a cytosolic protein complex that binds to dilysine motifs and reversibly associates with Golgi non-clathrin-coated vesicles, which further mediate biosynthetic protein transport from the ER, via the Golgi up to the trans Golgi network. Coatomer complex is required for budding from Golgi membranes, and is essential for the retrograde Golgi-to-ER transport of dilysine-tagged proteins (By similarity).</text>
</comment>
<comment type="subunit">
    <text evidence="1">Oligomeric complex that consists of at least the alpha, beta, beta', gamma, delta, epsilon and zeta subunits.</text>
</comment>
<comment type="subcellular location">
    <subcellularLocation>
        <location evidence="1">Cytoplasm</location>
    </subcellularLocation>
    <subcellularLocation>
        <location evidence="1">Golgi apparatus membrane</location>
        <topology evidence="1">Peripheral membrane protein</topology>
        <orientation evidence="1">Cytoplasmic side</orientation>
    </subcellularLocation>
    <subcellularLocation>
        <location evidence="1">Cytoplasmic vesicle</location>
        <location evidence="1">COPI-coated vesicle membrane</location>
        <topology evidence="1">Peripheral membrane protein</topology>
        <orientation evidence="1">Cytoplasmic side</orientation>
    </subcellularLocation>
    <text evidence="1">The coatomer is cytoplasmic or polymerized on the cytoplasmic side of the Golgi, as well as on the vesicles/buds originating from it.</text>
</comment>
<comment type="alternative products">
    <event type="alternative splicing"/>
    <isoform>
        <id>Q8L828-1</id>
        <name>1</name>
        <sequence type="displayed"/>
    </isoform>
    <isoform>
        <id>Q8L828-2</id>
        <name>2</name>
        <sequence type="described" ref="VSP_024872"/>
    </isoform>
</comment>
<comment type="miscellaneous">
    <molecule>Isoform 2</molecule>
    <text evidence="3">May be due to intron retention.</text>
</comment>
<comment type="similarity">
    <text evidence="3">Belongs to the WD repeat COPB2 family.</text>
</comment>
<comment type="sequence caution" evidence="3">
    <conflict type="erroneous gene model prediction">
        <sequence resource="EMBL-CDS" id="BAB02664"/>
    </conflict>
</comment>
<feature type="chain" id="PRO_0000285606" description="Coatomer subunit beta'-3">
    <location>
        <begin position="1"/>
        <end position="909"/>
    </location>
</feature>
<feature type="repeat" description="WD 1">
    <location>
        <begin position="13"/>
        <end position="52"/>
    </location>
</feature>
<feature type="repeat" description="WD 2">
    <location>
        <begin position="55"/>
        <end position="94"/>
    </location>
</feature>
<feature type="repeat" description="WD 3">
    <location>
        <begin position="97"/>
        <end position="136"/>
    </location>
</feature>
<feature type="repeat" description="WD 4">
    <location>
        <begin position="140"/>
        <end position="180"/>
    </location>
</feature>
<feature type="repeat" description="WD 5">
    <location>
        <begin position="183"/>
        <end position="224"/>
    </location>
</feature>
<feature type="repeat" description="WD 6">
    <location>
        <begin position="227"/>
        <end position="266"/>
    </location>
</feature>
<feature type="repeat" description="WD 7">
    <location>
        <begin position="269"/>
        <end position="309"/>
    </location>
</feature>
<feature type="repeat" description="WD 8">
    <location>
        <begin position="351"/>
        <end position="390"/>
    </location>
</feature>
<feature type="repeat" description="WD 9">
    <location>
        <begin position="461"/>
        <end position="501"/>
    </location>
</feature>
<feature type="region of interest" description="Disordered" evidence="2">
    <location>
        <begin position="862"/>
        <end position="909"/>
    </location>
</feature>
<feature type="compositionally biased region" description="Acidic residues" evidence="2">
    <location>
        <begin position="870"/>
        <end position="892"/>
    </location>
</feature>
<feature type="splice variant" id="VSP_024872" description="In isoform 2." evidence="3">
    <original>VLTPHP</original>
    <variation>GEEEWGTNNKGNPSA</variation>
    <location>
        <begin position="904"/>
        <end position="909"/>
    </location>
</feature>
<proteinExistence type="evidence at transcript level"/>
<dbReference type="EMBL" id="AB012247">
    <property type="protein sequence ID" value="BAB02664.1"/>
    <property type="status" value="ALT_SEQ"/>
    <property type="molecule type" value="Genomic_DNA"/>
</dbReference>
<dbReference type="EMBL" id="CP002686">
    <property type="protein sequence ID" value="AEE75755.1"/>
    <property type="molecule type" value="Genomic_DNA"/>
</dbReference>
<dbReference type="EMBL" id="CP002686">
    <property type="protein sequence ID" value="AEE75756.1"/>
    <property type="molecule type" value="Genomic_DNA"/>
</dbReference>
<dbReference type="EMBL" id="CP002686">
    <property type="protein sequence ID" value="AEE75757.1"/>
    <property type="molecule type" value="Genomic_DNA"/>
</dbReference>
<dbReference type="EMBL" id="CP002686">
    <property type="protein sequence ID" value="AEE75758.2"/>
    <property type="molecule type" value="Genomic_DNA"/>
</dbReference>
<dbReference type="EMBL" id="CP002686">
    <property type="protein sequence ID" value="ANM65912.1"/>
    <property type="molecule type" value="Genomic_DNA"/>
</dbReference>
<dbReference type="EMBL" id="AY120786">
    <property type="protein sequence ID" value="AAM53344.1"/>
    <property type="molecule type" value="mRNA"/>
</dbReference>
<dbReference type="EMBL" id="BT001201">
    <property type="protein sequence ID" value="AAN65088.1"/>
    <property type="molecule type" value="mRNA"/>
</dbReference>
<dbReference type="RefSeq" id="NP_001319563.1">
    <molecule id="Q8L828-2"/>
    <property type="nucleotide sequence ID" value="NM_001338195.1"/>
</dbReference>
<dbReference type="RefSeq" id="NP_001327848.1">
    <molecule id="Q8L828-2"/>
    <property type="nucleotide sequence ID" value="NM_001338196.1"/>
</dbReference>
<dbReference type="RefSeq" id="NP_188219.2">
    <molecule id="Q8L828-2"/>
    <property type="nucleotide sequence ID" value="NM_112468.3"/>
</dbReference>
<dbReference type="RefSeq" id="NP_850592.1">
    <molecule id="Q8L828-1"/>
    <property type="nucleotide sequence ID" value="NM_180261.2"/>
</dbReference>
<dbReference type="RefSeq" id="NP_850593.1">
    <molecule id="Q8L828-2"/>
    <property type="nucleotide sequence ID" value="NM_180262.2"/>
</dbReference>
<dbReference type="SMR" id="Q8L828"/>
<dbReference type="BioGRID" id="6176">
    <property type="interactions" value="2"/>
</dbReference>
<dbReference type="FunCoup" id="Q8L828">
    <property type="interactions" value="4515"/>
</dbReference>
<dbReference type="STRING" id="3702.Q8L828"/>
<dbReference type="iPTMnet" id="Q8L828"/>
<dbReference type="PaxDb" id="3702-AT3G15980.5"/>
<dbReference type="ProteomicsDB" id="241137">
    <molecule id="Q8L828-1"/>
</dbReference>
<dbReference type="EnsemblPlants" id="AT3G15980.1">
    <molecule id="Q8L828-1"/>
    <property type="protein sequence ID" value="AT3G15980.1"/>
    <property type="gene ID" value="AT3G15980"/>
</dbReference>
<dbReference type="EnsemblPlants" id="AT3G15980.2">
    <molecule id="Q8L828-2"/>
    <property type="protein sequence ID" value="AT3G15980.2"/>
    <property type="gene ID" value="AT3G15980"/>
</dbReference>
<dbReference type="EnsemblPlants" id="AT3G15980.3">
    <molecule id="Q8L828-2"/>
    <property type="protein sequence ID" value="AT3G15980.3"/>
    <property type="gene ID" value="AT3G15980"/>
</dbReference>
<dbReference type="EnsemblPlants" id="AT3G15980.4">
    <molecule id="Q8L828-2"/>
    <property type="protein sequence ID" value="AT3G15980.4"/>
    <property type="gene ID" value="AT3G15980"/>
</dbReference>
<dbReference type="EnsemblPlants" id="AT3G15980.6">
    <molecule id="Q8L828-2"/>
    <property type="protein sequence ID" value="AT3G15980.6"/>
    <property type="gene ID" value="AT3G15980"/>
</dbReference>
<dbReference type="GeneID" id="820842"/>
<dbReference type="Gramene" id="AT3G15980.1">
    <molecule id="Q8L828-1"/>
    <property type="protein sequence ID" value="AT3G15980.1"/>
    <property type="gene ID" value="AT3G15980"/>
</dbReference>
<dbReference type="Gramene" id="AT3G15980.2">
    <molecule id="Q8L828-2"/>
    <property type="protein sequence ID" value="AT3G15980.2"/>
    <property type="gene ID" value="AT3G15980"/>
</dbReference>
<dbReference type="Gramene" id="AT3G15980.3">
    <molecule id="Q8L828-2"/>
    <property type="protein sequence ID" value="AT3G15980.3"/>
    <property type="gene ID" value="AT3G15980"/>
</dbReference>
<dbReference type="Gramene" id="AT3G15980.4">
    <molecule id="Q8L828-2"/>
    <property type="protein sequence ID" value="AT3G15980.4"/>
    <property type="gene ID" value="AT3G15980"/>
</dbReference>
<dbReference type="Gramene" id="AT3G15980.6">
    <molecule id="Q8L828-2"/>
    <property type="protein sequence ID" value="AT3G15980.6"/>
    <property type="gene ID" value="AT3G15980"/>
</dbReference>
<dbReference type="KEGG" id="ath:AT3G15980"/>
<dbReference type="Araport" id="AT3G15980"/>
<dbReference type="TAIR" id="AT3G15980"/>
<dbReference type="eggNOG" id="KOG0276">
    <property type="taxonomic scope" value="Eukaryota"/>
</dbReference>
<dbReference type="HOGENOM" id="CLU_005507_1_0_1"/>
<dbReference type="InParanoid" id="Q8L828"/>
<dbReference type="OrthoDB" id="10261470at2759"/>
<dbReference type="PhylomeDB" id="Q8L828"/>
<dbReference type="PRO" id="PR:Q8L828"/>
<dbReference type="Proteomes" id="UP000006548">
    <property type="component" value="Chromosome 3"/>
</dbReference>
<dbReference type="ExpressionAtlas" id="Q8L828">
    <property type="expression patterns" value="baseline and differential"/>
</dbReference>
<dbReference type="GO" id="GO:0030663">
    <property type="term" value="C:COPI-coated vesicle membrane"/>
    <property type="evidence" value="ECO:0007669"/>
    <property type="project" value="UniProtKB-SubCell"/>
</dbReference>
<dbReference type="GO" id="GO:0000139">
    <property type="term" value="C:Golgi membrane"/>
    <property type="evidence" value="ECO:0007669"/>
    <property type="project" value="UniProtKB-SubCell"/>
</dbReference>
<dbReference type="GO" id="GO:0030117">
    <property type="term" value="C:membrane coat"/>
    <property type="evidence" value="ECO:0007669"/>
    <property type="project" value="InterPro"/>
</dbReference>
<dbReference type="GO" id="GO:0005198">
    <property type="term" value="F:structural molecule activity"/>
    <property type="evidence" value="ECO:0007669"/>
    <property type="project" value="InterPro"/>
</dbReference>
<dbReference type="GO" id="GO:0006886">
    <property type="term" value="P:intracellular protein transport"/>
    <property type="evidence" value="ECO:0007669"/>
    <property type="project" value="InterPro"/>
</dbReference>
<dbReference type="GO" id="GO:0016192">
    <property type="term" value="P:vesicle-mediated transport"/>
    <property type="evidence" value="ECO:0007669"/>
    <property type="project" value="UniProtKB-KW"/>
</dbReference>
<dbReference type="CDD" id="cd22947">
    <property type="entry name" value="Coatomer_WDAD_beta-like"/>
    <property type="match status" value="1"/>
</dbReference>
<dbReference type="CDD" id="cd00200">
    <property type="entry name" value="WD40"/>
    <property type="match status" value="1"/>
</dbReference>
<dbReference type="FunFam" id="1.25.40.470:FF:000001">
    <property type="entry name" value="Coatomer subunit beta"/>
    <property type="match status" value="1"/>
</dbReference>
<dbReference type="FunFam" id="2.130.10.10:FF:000008">
    <property type="entry name" value="Coatomer subunit beta"/>
    <property type="match status" value="1"/>
</dbReference>
<dbReference type="Gene3D" id="1.25.40.470">
    <property type="match status" value="1"/>
</dbReference>
<dbReference type="Gene3D" id="2.130.10.10">
    <property type="entry name" value="YVTN repeat-like/Quinoprotein amine dehydrogenase"/>
    <property type="match status" value="1"/>
</dbReference>
<dbReference type="InterPro" id="IPR006692">
    <property type="entry name" value="Beta-prop_COPA/B_2nd"/>
</dbReference>
<dbReference type="InterPro" id="IPR050844">
    <property type="entry name" value="Coatomer_complex_subunit"/>
</dbReference>
<dbReference type="InterPro" id="IPR016453">
    <property type="entry name" value="COPB2"/>
</dbReference>
<dbReference type="InterPro" id="IPR020472">
    <property type="entry name" value="G-protein_beta_WD-40_rep"/>
</dbReference>
<dbReference type="InterPro" id="IPR056176">
    <property type="entry name" value="TPR_COPA_B"/>
</dbReference>
<dbReference type="InterPro" id="IPR015943">
    <property type="entry name" value="WD40/YVTN_repeat-like_dom_sf"/>
</dbReference>
<dbReference type="InterPro" id="IPR036322">
    <property type="entry name" value="WD40_repeat_dom_sf"/>
</dbReference>
<dbReference type="InterPro" id="IPR001680">
    <property type="entry name" value="WD40_rpt"/>
</dbReference>
<dbReference type="PANTHER" id="PTHR19876">
    <property type="entry name" value="COATOMER"/>
    <property type="match status" value="1"/>
</dbReference>
<dbReference type="PANTHER" id="PTHR19876:SF75">
    <property type="entry name" value="COATOMER SUBUNIT BETA'-3"/>
    <property type="match status" value="1"/>
</dbReference>
<dbReference type="Pfam" id="PF04053">
    <property type="entry name" value="B-prop_COPA_B_2nd"/>
    <property type="match status" value="1"/>
</dbReference>
<dbReference type="Pfam" id="PF23953">
    <property type="entry name" value="TPR_COPA_B"/>
    <property type="match status" value="1"/>
</dbReference>
<dbReference type="Pfam" id="PF00400">
    <property type="entry name" value="WD40"/>
    <property type="match status" value="6"/>
</dbReference>
<dbReference type="PIRSF" id="PIRSF005567">
    <property type="entry name" value="Coatomer_beta'_subunit"/>
    <property type="match status" value="1"/>
</dbReference>
<dbReference type="PRINTS" id="PR00320">
    <property type="entry name" value="GPROTEINBRPT"/>
</dbReference>
<dbReference type="SMART" id="SM00320">
    <property type="entry name" value="WD40"/>
    <property type="match status" value="7"/>
</dbReference>
<dbReference type="SUPFAM" id="SSF50978">
    <property type="entry name" value="WD40 repeat-like"/>
    <property type="match status" value="2"/>
</dbReference>
<dbReference type="PROSITE" id="PS50082">
    <property type="entry name" value="WD_REPEATS_2"/>
    <property type="match status" value="4"/>
</dbReference>
<dbReference type="PROSITE" id="PS50294">
    <property type="entry name" value="WD_REPEATS_REGION"/>
    <property type="match status" value="1"/>
</dbReference>
<protein>
    <recommendedName>
        <fullName>Coatomer subunit beta'-3</fullName>
    </recommendedName>
    <alternativeName>
        <fullName>Beta'-coat protein 3</fullName>
        <shortName>Beta'-COP 3</shortName>
    </alternativeName>
</protein>